<organism>
    <name type="scientific">Staphylococcus epidermidis (strain ATCC 35984 / DSM 28319 / BCRC 17069 / CCUG 31568 / BM 3577 / RP62A)</name>
    <dbReference type="NCBI Taxonomy" id="176279"/>
    <lineage>
        <taxon>Bacteria</taxon>
        <taxon>Bacillati</taxon>
        <taxon>Bacillota</taxon>
        <taxon>Bacilli</taxon>
        <taxon>Bacillales</taxon>
        <taxon>Staphylococcaceae</taxon>
        <taxon>Staphylococcus</taxon>
    </lineage>
</organism>
<protein>
    <recommendedName>
        <fullName evidence="1">Uridine kinase</fullName>
        <ecNumber evidence="1">2.7.1.48</ecNumber>
    </recommendedName>
    <alternativeName>
        <fullName evidence="1">Cytidine monophosphokinase</fullName>
    </alternativeName>
    <alternativeName>
        <fullName evidence="1">Uridine monophosphokinase</fullName>
    </alternativeName>
</protein>
<reference key="1">
    <citation type="journal article" date="2005" name="J. Bacteriol.">
        <title>Insights on evolution of virulence and resistance from the complete genome analysis of an early methicillin-resistant Staphylococcus aureus strain and a biofilm-producing methicillin-resistant Staphylococcus epidermidis strain.</title>
        <authorList>
            <person name="Gill S.R."/>
            <person name="Fouts D.E."/>
            <person name="Archer G.L."/>
            <person name="Mongodin E.F."/>
            <person name="DeBoy R.T."/>
            <person name="Ravel J."/>
            <person name="Paulsen I.T."/>
            <person name="Kolonay J.F."/>
            <person name="Brinkac L.M."/>
            <person name="Beanan M.J."/>
            <person name="Dodson R.J."/>
            <person name="Daugherty S.C."/>
            <person name="Madupu R."/>
            <person name="Angiuoli S.V."/>
            <person name="Durkin A.S."/>
            <person name="Haft D.H."/>
            <person name="Vamathevan J.J."/>
            <person name="Khouri H."/>
            <person name="Utterback T.R."/>
            <person name="Lee C."/>
            <person name="Dimitrov G."/>
            <person name="Jiang L."/>
            <person name="Qin H."/>
            <person name="Weidman J."/>
            <person name="Tran K."/>
            <person name="Kang K.H."/>
            <person name="Hance I.R."/>
            <person name="Nelson K.E."/>
            <person name="Fraser C.M."/>
        </authorList>
    </citation>
    <scope>NUCLEOTIDE SEQUENCE [LARGE SCALE GENOMIC DNA]</scope>
    <source>
        <strain>ATCC 35984 / DSM 28319 / BCRC 17069 / CCUG 31568 / BM 3577 / RP62A</strain>
    </source>
</reference>
<evidence type="ECO:0000255" key="1">
    <source>
        <dbReference type="HAMAP-Rule" id="MF_00551"/>
    </source>
</evidence>
<keyword id="KW-0067">ATP-binding</keyword>
<keyword id="KW-0963">Cytoplasm</keyword>
<keyword id="KW-0418">Kinase</keyword>
<keyword id="KW-0547">Nucleotide-binding</keyword>
<keyword id="KW-1185">Reference proteome</keyword>
<keyword id="KW-0808">Transferase</keyword>
<sequence>MNQTTIIGIAGGSGSGKTTVTNAIMKNLEGHSVALLAQDYYYKDQSHLTFEERLETNYDHPFAFDNDLLIHNLKDLRNGKPVEVPTYDYSQHTRSKETIAFDPKDVIIVEGIFALENNTLRDMMDVKIYVDTDADLRILRRLTRDTKERGRTMESVINQYLNVVRPMHEQFIEPTKKHADIIIPEGGSNKVAIDIMTTKIQSLVSKK</sequence>
<name>URK_STAEQ</name>
<feature type="chain" id="PRO_0000164495" description="Uridine kinase">
    <location>
        <begin position="1"/>
        <end position="207"/>
    </location>
</feature>
<feature type="binding site" evidence="1">
    <location>
        <begin position="11"/>
        <end position="18"/>
    </location>
    <ligand>
        <name>ATP</name>
        <dbReference type="ChEBI" id="CHEBI:30616"/>
    </ligand>
</feature>
<accession>Q5HNT9</accession>
<dbReference type="EC" id="2.7.1.48" evidence="1"/>
<dbReference type="EMBL" id="CP000029">
    <property type="protein sequence ID" value="AAW54540.1"/>
    <property type="molecule type" value="Genomic_DNA"/>
</dbReference>
<dbReference type="RefSeq" id="WP_001830824.1">
    <property type="nucleotide sequence ID" value="NC_002976.3"/>
</dbReference>
<dbReference type="SMR" id="Q5HNT9"/>
<dbReference type="STRING" id="176279.SERP1175"/>
<dbReference type="GeneID" id="50018590"/>
<dbReference type="KEGG" id="ser:SERP1175"/>
<dbReference type="eggNOG" id="COG0572">
    <property type="taxonomic scope" value="Bacteria"/>
</dbReference>
<dbReference type="HOGENOM" id="CLU_021278_1_2_9"/>
<dbReference type="UniPathway" id="UPA00574">
    <property type="reaction ID" value="UER00637"/>
</dbReference>
<dbReference type="UniPathway" id="UPA00579">
    <property type="reaction ID" value="UER00640"/>
</dbReference>
<dbReference type="Proteomes" id="UP000000531">
    <property type="component" value="Chromosome"/>
</dbReference>
<dbReference type="GO" id="GO:0005737">
    <property type="term" value="C:cytoplasm"/>
    <property type="evidence" value="ECO:0007669"/>
    <property type="project" value="UniProtKB-SubCell"/>
</dbReference>
<dbReference type="GO" id="GO:0005524">
    <property type="term" value="F:ATP binding"/>
    <property type="evidence" value="ECO:0007669"/>
    <property type="project" value="UniProtKB-UniRule"/>
</dbReference>
<dbReference type="GO" id="GO:0043771">
    <property type="term" value="F:cytidine kinase activity"/>
    <property type="evidence" value="ECO:0007669"/>
    <property type="project" value="RHEA"/>
</dbReference>
<dbReference type="GO" id="GO:0004849">
    <property type="term" value="F:uridine kinase activity"/>
    <property type="evidence" value="ECO:0007669"/>
    <property type="project" value="UniProtKB-UniRule"/>
</dbReference>
<dbReference type="GO" id="GO:0044211">
    <property type="term" value="P:CTP salvage"/>
    <property type="evidence" value="ECO:0007669"/>
    <property type="project" value="UniProtKB-UniRule"/>
</dbReference>
<dbReference type="GO" id="GO:0044206">
    <property type="term" value="P:UMP salvage"/>
    <property type="evidence" value="ECO:0007669"/>
    <property type="project" value="UniProtKB-UniRule"/>
</dbReference>
<dbReference type="CDD" id="cd02023">
    <property type="entry name" value="UMPK"/>
    <property type="match status" value="1"/>
</dbReference>
<dbReference type="Gene3D" id="3.40.50.300">
    <property type="entry name" value="P-loop containing nucleotide triphosphate hydrolases"/>
    <property type="match status" value="1"/>
</dbReference>
<dbReference type="HAMAP" id="MF_00551">
    <property type="entry name" value="Uridine_kinase"/>
    <property type="match status" value="1"/>
</dbReference>
<dbReference type="InterPro" id="IPR027417">
    <property type="entry name" value="P-loop_NTPase"/>
</dbReference>
<dbReference type="InterPro" id="IPR006083">
    <property type="entry name" value="PRK/URK"/>
</dbReference>
<dbReference type="InterPro" id="IPR026008">
    <property type="entry name" value="Uridine_kinase"/>
</dbReference>
<dbReference type="InterPro" id="IPR000764">
    <property type="entry name" value="Uridine_kinase-like"/>
</dbReference>
<dbReference type="NCBIfam" id="NF004018">
    <property type="entry name" value="PRK05480.1"/>
    <property type="match status" value="1"/>
</dbReference>
<dbReference type="NCBIfam" id="TIGR00235">
    <property type="entry name" value="udk"/>
    <property type="match status" value="1"/>
</dbReference>
<dbReference type="PANTHER" id="PTHR10285">
    <property type="entry name" value="URIDINE KINASE"/>
    <property type="match status" value="1"/>
</dbReference>
<dbReference type="Pfam" id="PF00485">
    <property type="entry name" value="PRK"/>
    <property type="match status" value="1"/>
</dbReference>
<dbReference type="PRINTS" id="PR00988">
    <property type="entry name" value="URIDINKINASE"/>
</dbReference>
<dbReference type="SUPFAM" id="SSF52540">
    <property type="entry name" value="P-loop containing nucleoside triphosphate hydrolases"/>
    <property type="match status" value="1"/>
</dbReference>
<proteinExistence type="inferred from homology"/>
<gene>
    <name evidence="1" type="primary">udk</name>
    <name type="ordered locus">SERP1175</name>
</gene>
<comment type="catalytic activity">
    <reaction evidence="1">
        <text>uridine + ATP = UMP + ADP + H(+)</text>
        <dbReference type="Rhea" id="RHEA:16825"/>
        <dbReference type="ChEBI" id="CHEBI:15378"/>
        <dbReference type="ChEBI" id="CHEBI:16704"/>
        <dbReference type="ChEBI" id="CHEBI:30616"/>
        <dbReference type="ChEBI" id="CHEBI:57865"/>
        <dbReference type="ChEBI" id="CHEBI:456216"/>
        <dbReference type="EC" id="2.7.1.48"/>
    </reaction>
</comment>
<comment type="catalytic activity">
    <reaction evidence="1">
        <text>cytidine + ATP = CMP + ADP + H(+)</text>
        <dbReference type="Rhea" id="RHEA:24674"/>
        <dbReference type="ChEBI" id="CHEBI:15378"/>
        <dbReference type="ChEBI" id="CHEBI:17562"/>
        <dbReference type="ChEBI" id="CHEBI:30616"/>
        <dbReference type="ChEBI" id="CHEBI:60377"/>
        <dbReference type="ChEBI" id="CHEBI:456216"/>
        <dbReference type="EC" id="2.7.1.48"/>
    </reaction>
</comment>
<comment type="pathway">
    <text evidence="1">Pyrimidine metabolism; CTP biosynthesis via salvage pathway; CTP from cytidine: step 1/3.</text>
</comment>
<comment type="pathway">
    <text evidence="1">Pyrimidine metabolism; UMP biosynthesis via salvage pathway; UMP from uridine: step 1/1.</text>
</comment>
<comment type="subcellular location">
    <subcellularLocation>
        <location evidence="1">Cytoplasm</location>
    </subcellularLocation>
</comment>
<comment type="similarity">
    <text evidence="1">Belongs to the uridine kinase family.</text>
</comment>